<proteinExistence type="inferred from homology"/>
<keyword id="KW-0131">Cell cycle</keyword>
<keyword id="KW-0132">Cell division</keyword>
<keyword id="KW-0133">Cell shape</keyword>
<keyword id="KW-0961">Cell wall biogenesis/degradation</keyword>
<keyword id="KW-0963">Cytoplasm</keyword>
<keyword id="KW-0274">FAD</keyword>
<keyword id="KW-0285">Flavoprotein</keyword>
<keyword id="KW-0521">NADP</keyword>
<keyword id="KW-0560">Oxidoreductase</keyword>
<keyword id="KW-0573">Peptidoglycan synthesis</keyword>
<keyword id="KW-1185">Reference proteome</keyword>
<dbReference type="EC" id="1.3.1.98" evidence="1"/>
<dbReference type="EMBL" id="AL590842">
    <property type="protein sequence ID" value="CAL22347.1"/>
    <property type="molecule type" value="Genomic_DNA"/>
</dbReference>
<dbReference type="EMBL" id="AE009952">
    <property type="protein sequence ID" value="AAM84059.1"/>
    <property type="molecule type" value="Genomic_DNA"/>
</dbReference>
<dbReference type="EMBL" id="AE017042">
    <property type="protein sequence ID" value="AAS63455.1"/>
    <property type="molecule type" value="Genomic_DNA"/>
</dbReference>
<dbReference type="PIR" id="AH0457">
    <property type="entry name" value="AH0457"/>
</dbReference>
<dbReference type="RefSeq" id="WP_002212288.1">
    <property type="nucleotide sequence ID" value="NZ_WUCM01000139.1"/>
</dbReference>
<dbReference type="RefSeq" id="YP_002348640.1">
    <property type="nucleotide sequence ID" value="NC_003143.1"/>
</dbReference>
<dbReference type="SMR" id="Q8ZAN4"/>
<dbReference type="STRING" id="214092.YPO3760"/>
<dbReference type="PaxDb" id="214092-YPO3760"/>
<dbReference type="DNASU" id="1145417"/>
<dbReference type="EnsemblBacteria" id="AAS63455">
    <property type="protein sequence ID" value="AAS63455"/>
    <property type="gene ID" value="YP_3288"/>
</dbReference>
<dbReference type="GeneID" id="57974954"/>
<dbReference type="KEGG" id="ype:YPO3760"/>
<dbReference type="KEGG" id="ypk:y0471"/>
<dbReference type="KEGG" id="ypm:YP_3288"/>
<dbReference type="PATRIC" id="fig|214092.21.peg.4280"/>
<dbReference type="eggNOG" id="COG0812">
    <property type="taxonomic scope" value="Bacteria"/>
</dbReference>
<dbReference type="HOGENOM" id="CLU_035304_0_0_6"/>
<dbReference type="OMA" id="APLTWFR"/>
<dbReference type="OrthoDB" id="9804753at2"/>
<dbReference type="UniPathway" id="UPA00219"/>
<dbReference type="Proteomes" id="UP000000815">
    <property type="component" value="Chromosome"/>
</dbReference>
<dbReference type="Proteomes" id="UP000001019">
    <property type="component" value="Chromosome"/>
</dbReference>
<dbReference type="Proteomes" id="UP000002490">
    <property type="component" value="Chromosome"/>
</dbReference>
<dbReference type="GO" id="GO:0005829">
    <property type="term" value="C:cytosol"/>
    <property type="evidence" value="ECO:0000318"/>
    <property type="project" value="GO_Central"/>
</dbReference>
<dbReference type="GO" id="GO:0071949">
    <property type="term" value="F:FAD binding"/>
    <property type="evidence" value="ECO:0007669"/>
    <property type="project" value="InterPro"/>
</dbReference>
<dbReference type="GO" id="GO:0050660">
    <property type="term" value="F:flavin adenine dinucleotide binding"/>
    <property type="evidence" value="ECO:0000318"/>
    <property type="project" value="GO_Central"/>
</dbReference>
<dbReference type="GO" id="GO:0008762">
    <property type="term" value="F:UDP-N-acetylmuramate dehydrogenase activity"/>
    <property type="evidence" value="ECO:0000318"/>
    <property type="project" value="GO_Central"/>
</dbReference>
<dbReference type="GO" id="GO:0051301">
    <property type="term" value="P:cell division"/>
    <property type="evidence" value="ECO:0007669"/>
    <property type="project" value="UniProtKB-KW"/>
</dbReference>
<dbReference type="GO" id="GO:0071555">
    <property type="term" value="P:cell wall organization"/>
    <property type="evidence" value="ECO:0000318"/>
    <property type="project" value="GO_Central"/>
</dbReference>
<dbReference type="GO" id="GO:0009252">
    <property type="term" value="P:peptidoglycan biosynthetic process"/>
    <property type="evidence" value="ECO:0007669"/>
    <property type="project" value="UniProtKB-UniRule"/>
</dbReference>
<dbReference type="GO" id="GO:0008360">
    <property type="term" value="P:regulation of cell shape"/>
    <property type="evidence" value="ECO:0007669"/>
    <property type="project" value="UniProtKB-KW"/>
</dbReference>
<dbReference type="Gene3D" id="3.30.465.10">
    <property type="match status" value="1"/>
</dbReference>
<dbReference type="Gene3D" id="3.90.78.10">
    <property type="entry name" value="UDP-N-acetylenolpyruvoylglucosamine reductase, C-terminal domain"/>
    <property type="match status" value="1"/>
</dbReference>
<dbReference type="Gene3D" id="3.30.43.10">
    <property type="entry name" value="Uridine Diphospho-n-acetylenolpyruvylglucosamine Reductase, domain 2"/>
    <property type="match status" value="1"/>
</dbReference>
<dbReference type="HAMAP" id="MF_00037">
    <property type="entry name" value="MurB"/>
    <property type="match status" value="1"/>
</dbReference>
<dbReference type="InterPro" id="IPR016166">
    <property type="entry name" value="FAD-bd_PCMH"/>
</dbReference>
<dbReference type="InterPro" id="IPR036318">
    <property type="entry name" value="FAD-bd_PCMH-like_sf"/>
</dbReference>
<dbReference type="InterPro" id="IPR016167">
    <property type="entry name" value="FAD-bd_PCMH_sub1"/>
</dbReference>
<dbReference type="InterPro" id="IPR016169">
    <property type="entry name" value="FAD-bd_PCMH_sub2"/>
</dbReference>
<dbReference type="InterPro" id="IPR003170">
    <property type="entry name" value="MurB"/>
</dbReference>
<dbReference type="InterPro" id="IPR011601">
    <property type="entry name" value="MurB_C"/>
</dbReference>
<dbReference type="InterPro" id="IPR036635">
    <property type="entry name" value="MurB_C_sf"/>
</dbReference>
<dbReference type="InterPro" id="IPR006094">
    <property type="entry name" value="Oxid_FAD_bind_N"/>
</dbReference>
<dbReference type="NCBIfam" id="TIGR00179">
    <property type="entry name" value="murB"/>
    <property type="match status" value="1"/>
</dbReference>
<dbReference type="NCBIfam" id="NF000755">
    <property type="entry name" value="PRK00046.1"/>
    <property type="match status" value="1"/>
</dbReference>
<dbReference type="PANTHER" id="PTHR21071">
    <property type="entry name" value="UDP-N-ACETYLENOLPYRUVOYLGLUCOSAMINE REDUCTASE"/>
    <property type="match status" value="1"/>
</dbReference>
<dbReference type="PANTHER" id="PTHR21071:SF4">
    <property type="entry name" value="UDP-N-ACETYLENOLPYRUVOYLGLUCOSAMINE REDUCTASE"/>
    <property type="match status" value="1"/>
</dbReference>
<dbReference type="Pfam" id="PF01565">
    <property type="entry name" value="FAD_binding_4"/>
    <property type="match status" value="1"/>
</dbReference>
<dbReference type="Pfam" id="PF02873">
    <property type="entry name" value="MurB_C"/>
    <property type="match status" value="1"/>
</dbReference>
<dbReference type="SUPFAM" id="SSF56176">
    <property type="entry name" value="FAD-binding/transporter-associated domain-like"/>
    <property type="match status" value="1"/>
</dbReference>
<dbReference type="SUPFAM" id="SSF56194">
    <property type="entry name" value="Uridine diphospho-N-Acetylenolpyruvylglucosamine reductase, MurB, C-terminal domain"/>
    <property type="match status" value="1"/>
</dbReference>
<dbReference type="PROSITE" id="PS51387">
    <property type="entry name" value="FAD_PCMH"/>
    <property type="match status" value="1"/>
</dbReference>
<organism>
    <name type="scientific">Yersinia pestis</name>
    <dbReference type="NCBI Taxonomy" id="632"/>
    <lineage>
        <taxon>Bacteria</taxon>
        <taxon>Pseudomonadati</taxon>
        <taxon>Pseudomonadota</taxon>
        <taxon>Gammaproteobacteria</taxon>
        <taxon>Enterobacterales</taxon>
        <taxon>Yersiniaceae</taxon>
        <taxon>Yersinia</taxon>
    </lineage>
</organism>
<name>MURB_YERPE</name>
<gene>
    <name evidence="1" type="primary">murB</name>
    <name type="ordered locus">YPO3760</name>
    <name type="ordered locus">y0471</name>
    <name type="ordered locus">YP_3288</name>
</gene>
<accession>Q8ZAN4</accession>
<accession>Q0WAP8</accession>
<reference key="1">
    <citation type="journal article" date="2001" name="Nature">
        <title>Genome sequence of Yersinia pestis, the causative agent of plague.</title>
        <authorList>
            <person name="Parkhill J."/>
            <person name="Wren B.W."/>
            <person name="Thomson N.R."/>
            <person name="Titball R.W."/>
            <person name="Holden M.T.G."/>
            <person name="Prentice M.B."/>
            <person name="Sebaihia M."/>
            <person name="James K.D."/>
            <person name="Churcher C.M."/>
            <person name="Mungall K.L."/>
            <person name="Baker S."/>
            <person name="Basham D."/>
            <person name="Bentley S.D."/>
            <person name="Brooks K."/>
            <person name="Cerdeno-Tarraga A.-M."/>
            <person name="Chillingworth T."/>
            <person name="Cronin A."/>
            <person name="Davies R.M."/>
            <person name="Davis P."/>
            <person name="Dougan G."/>
            <person name="Feltwell T."/>
            <person name="Hamlin N."/>
            <person name="Holroyd S."/>
            <person name="Jagels K."/>
            <person name="Karlyshev A.V."/>
            <person name="Leather S."/>
            <person name="Moule S."/>
            <person name="Oyston P.C.F."/>
            <person name="Quail M.A."/>
            <person name="Rutherford K.M."/>
            <person name="Simmonds M."/>
            <person name="Skelton J."/>
            <person name="Stevens K."/>
            <person name="Whitehead S."/>
            <person name="Barrell B.G."/>
        </authorList>
    </citation>
    <scope>NUCLEOTIDE SEQUENCE [LARGE SCALE GENOMIC DNA]</scope>
    <source>
        <strain>CO-92 / Biovar Orientalis</strain>
    </source>
</reference>
<reference key="2">
    <citation type="journal article" date="2002" name="J. Bacteriol.">
        <title>Genome sequence of Yersinia pestis KIM.</title>
        <authorList>
            <person name="Deng W."/>
            <person name="Burland V."/>
            <person name="Plunkett G. III"/>
            <person name="Boutin A."/>
            <person name="Mayhew G.F."/>
            <person name="Liss P."/>
            <person name="Perna N.T."/>
            <person name="Rose D.J."/>
            <person name="Mau B."/>
            <person name="Zhou S."/>
            <person name="Schwartz D.C."/>
            <person name="Fetherston J.D."/>
            <person name="Lindler L.E."/>
            <person name="Brubaker R.R."/>
            <person name="Plano G.V."/>
            <person name="Straley S.C."/>
            <person name="McDonough K.A."/>
            <person name="Nilles M.L."/>
            <person name="Matson J.S."/>
            <person name="Blattner F.R."/>
            <person name="Perry R.D."/>
        </authorList>
    </citation>
    <scope>NUCLEOTIDE SEQUENCE [LARGE SCALE GENOMIC DNA]</scope>
    <source>
        <strain>KIM10+ / Biovar Mediaevalis</strain>
    </source>
</reference>
<reference key="3">
    <citation type="journal article" date="2004" name="DNA Res.">
        <title>Complete genome sequence of Yersinia pestis strain 91001, an isolate avirulent to humans.</title>
        <authorList>
            <person name="Song Y."/>
            <person name="Tong Z."/>
            <person name="Wang J."/>
            <person name="Wang L."/>
            <person name="Guo Z."/>
            <person name="Han Y."/>
            <person name="Zhang J."/>
            <person name="Pei D."/>
            <person name="Zhou D."/>
            <person name="Qin H."/>
            <person name="Pang X."/>
            <person name="Han Y."/>
            <person name="Zhai J."/>
            <person name="Li M."/>
            <person name="Cui B."/>
            <person name="Qi Z."/>
            <person name="Jin L."/>
            <person name="Dai R."/>
            <person name="Chen F."/>
            <person name="Li S."/>
            <person name="Ye C."/>
            <person name="Du Z."/>
            <person name="Lin W."/>
            <person name="Wang J."/>
            <person name="Yu J."/>
            <person name="Yang H."/>
            <person name="Wang J."/>
            <person name="Huang P."/>
            <person name="Yang R."/>
        </authorList>
    </citation>
    <scope>NUCLEOTIDE SEQUENCE [LARGE SCALE GENOMIC DNA]</scope>
    <source>
        <strain>91001 / Biovar Mediaevalis</strain>
    </source>
</reference>
<protein>
    <recommendedName>
        <fullName evidence="1">UDP-N-acetylenolpyruvoylglucosamine reductase</fullName>
        <ecNumber evidence="1">1.3.1.98</ecNumber>
    </recommendedName>
    <alternativeName>
        <fullName evidence="1">UDP-N-acetylmuramate dehydrogenase</fullName>
    </alternativeName>
</protein>
<feature type="chain" id="PRO_0000179296" description="UDP-N-acetylenolpyruvoylglucosamine reductase">
    <location>
        <begin position="1"/>
        <end position="345"/>
    </location>
</feature>
<feature type="domain" description="FAD-binding PCMH-type" evidence="1">
    <location>
        <begin position="16"/>
        <end position="186"/>
    </location>
</feature>
<feature type="active site" evidence="1">
    <location>
        <position position="162"/>
    </location>
</feature>
<feature type="active site" description="Proton donor" evidence="1">
    <location>
        <position position="232"/>
    </location>
</feature>
<feature type="active site" evidence="1">
    <location>
        <position position="328"/>
    </location>
</feature>
<comment type="function">
    <text evidence="1">Cell wall formation.</text>
</comment>
<comment type="catalytic activity">
    <reaction evidence="1">
        <text>UDP-N-acetyl-alpha-D-muramate + NADP(+) = UDP-N-acetyl-3-O-(1-carboxyvinyl)-alpha-D-glucosamine + NADPH + H(+)</text>
        <dbReference type="Rhea" id="RHEA:12248"/>
        <dbReference type="ChEBI" id="CHEBI:15378"/>
        <dbReference type="ChEBI" id="CHEBI:57783"/>
        <dbReference type="ChEBI" id="CHEBI:58349"/>
        <dbReference type="ChEBI" id="CHEBI:68483"/>
        <dbReference type="ChEBI" id="CHEBI:70757"/>
        <dbReference type="EC" id="1.3.1.98"/>
    </reaction>
</comment>
<comment type="cofactor">
    <cofactor evidence="1">
        <name>FAD</name>
        <dbReference type="ChEBI" id="CHEBI:57692"/>
    </cofactor>
</comment>
<comment type="pathway">
    <text evidence="1">Cell wall biogenesis; peptidoglycan biosynthesis.</text>
</comment>
<comment type="subcellular location">
    <subcellularLocation>
        <location evidence="1">Cytoplasm</location>
    </subcellularLocation>
</comment>
<comment type="similarity">
    <text evidence="1">Belongs to the MurB family.</text>
</comment>
<sequence length="345" mass="37767">MSNQRSSLKHLNTFALPAYASNVISAGSVETLIAAWHESKAKRQPVLLLGEGSNVLFIKNFSGTVLLNRIMGITSTEDSAAWYLHVGAGENWHQLVCHSLQNNMPGLENLALIPGCVGSAPIQNIGAYGVELKQVCEYVDLLDMDKGTIQRISAEECQFGYRDSIFKHRYGNGFAIVSVGIKLMKSWTPTLGYGDLIHMDPLTVTATDIFNSVCTMRRSKLPDPMVTGNAGSFFKNPVVSAAIAEEIVHCYPNAPHYLQPDGSVKLAAGWLIDQCSLKGYQIGGAAVHQQQALVLINQSEATGQDVIHLARYIRQQVAQRFSIWLEPEVRFIADNGEVNAVEHLS</sequence>
<evidence type="ECO:0000255" key="1">
    <source>
        <dbReference type="HAMAP-Rule" id="MF_00037"/>
    </source>
</evidence>